<gene>
    <name evidence="1" type="primary">pxpA</name>
    <name type="ordered locus">BC_3066</name>
</gene>
<evidence type="ECO:0000255" key="1">
    <source>
        <dbReference type="HAMAP-Rule" id="MF_00691"/>
    </source>
</evidence>
<name>PXPA_BACCR</name>
<organism>
    <name type="scientific">Bacillus cereus (strain ATCC 14579 / DSM 31 / CCUG 7414 / JCM 2152 / NBRC 15305 / NCIMB 9373 / NCTC 2599 / NRRL B-3711)</name>
    <dbReference type="NCBI Taxonomy" id="226900"/>
    <lineage>
        <taxon>Bacteria</taxon>
        <taxon>Bacillati</taxon>
        <taxon>Bacillota</taxon>
        <taxon>Bacilli</taxon>
        <taxon>Bacillales</taxon>
        <taxon>Bacillaceae</taxon>
        <taxon>Bacillus</taxon>
        <taxon>Bacillus cereus group</taxon>
    </lineage>
</organism>
<comment type="function">
    <text evidence="1">Catalyzes the cleavage of 5-oxoproline to form L-glutamate coupled to the hydrolysis of ATP to ADP and inorganic phosphate.</text>
</comment>
<comment type="catalytic activity">
    <reaction evidence="1">
        <text>5-oxo-L-proline + ATP + 2 H2O = L-glutamate + ADP + phosphate + H(+)</text>
        <dbReference type="Rhea" id="RHEA:10348"/>
        <dbReference type="ChEBI" id="CHEBI:15377"/>
        <dbReference type="ChEBI" id="CHEBI:15378"/>
        <dbReference type="ChEBI" id="CHEBI:29985"/>
        <dbReference type="ChEBI" id="CHEBI:30616"/>
        <dbReference type="ChEBI" id="CHEBI:43474"/>
        <dbReference type="ChEBI" id="CHEBI:58402"/>
        <dbReference type="ChEBI" id="CHEBI:456216"/>
        <dbReference type="EC" id="3.5.2.9"/>
    </reaction>
</comment>
<comment type="subunit">
    <text evidence="1">Forms a complex composed of PxpA, PxpB and PxpC.</text>
</comment>
<comment type="similarity">
    <text evidence="1">Belongs to the LamB/PxpA family.</text>
</comment>
<protein>
    <recommendedName>
        <fullName evidence="1">5-oxoprolinase subunit A</fullName>
        <shortName evidence="1">5-OPase subunit A</shortName>
        <ecNumber evidence="1">3.5.2.9</ecNumber>
    </recommendedName>
    <alternativeName>
        <fullName evidence="1">5-oxoprolinase (ATP-hydrolyzing) subunit A</fullName>
    </alternativeName>
</protein>
<accession>Q81BT0</accession>
<keyword id="KW-0067">ATP-binding</keyword>
<keyword id="KW-0378">Hydrolase</keyword>
<keyword id="KW-0547">Nucleotide-binding</keyword>
<keyword id="KW-1185">Reference proteome</keyword>
<feature type="chain" id="PRO_0000184984" description="5-oxoprolinase subunit A">
    <location>
        <begin position="1"/>
        <end position="253"/>
    </location>
</feature>
<sequence>MTTIDLNCDLGESFGAYKMGNDDEILPFVSSINVACGFHAGDPSIMRQTVEKALEHNVAIGAHPGFPDLIGFGRRNMNVSASEVYDYVLYQTGALDAFVKAAGGKMQHVKPHGALYNMAASNPEIADAIAKAIYHINPSLLLYGLANSEAFIQAAEKYKVTLVQEAFADRTYKQDGTLTSRTEENALIKDEDEAIKQVLQMVKEGYVNSVNGEKVAVQAQTICLHGDGEKAVQFAERIYRTFKLNGISICAPK</sequence>
<proteinExistence type="inferred from homology"/>
<dbReference type="EC" id="3.5.2.9" evidence="1"/>
<dbReference type="EMBL" id="AE016877">
    <property type="protein sequence ID" value="AAP10013.1"/>
    <property type="molecule type" value="Genomic_DNA"/>
</dbReference>
<dbReference type="RefSeq" id="NP_832812.1">
    <property type="nucleotide sequence ID" value="NC_004722.1"/>
</dbReference>
<dbReference type="RefSeq" id="WP_000207320.1">
    <property type="nucleotide sequence ID" value="NZ_CP138336.1"/>
</dbReference>
<dbReference type="SMR" id="Q81BT0"/>
<dbReference type="STRING" id="226900.BC_3066"/>
<dbReference type="KEGG" id="bce:BC3066"/>
<dbReference type="PATRIC" id="fig|226900.8.peg.3141"/>
<dbReference type="HOGENOM" id="CLU_069535_0_0_9"/>
<dbReference type="OrthoDB" id="9773478at2"/>
<dbReference type="Proteomes" id="UP000001417">
    <property type="component" value="Chromosome"/>
</dbReference>
<dbReference type="GO" id="GO:0017168">
    <property type="term" value="F:5-oxoprolinase (ATP-hydrolyzing) activity"/>
    <property type="evidence" value="ECO:0007669"/>
    <property type="project" value="UniProtKB-UniRule"/>
</dbReference>
<dbReference type="GO" id="GO:0005524">
    <property type="term" value="F:ATP binding"/>
    <property type="evidence" value="ECO:0007669"/>
    <property type="project" value="UniProtKB-UniRule"/>
</dbReference>
<dbReference type="GO" id="GO:0005975">
    <property type="term" value="P:carbohydrate metabolic process"/>
    <property type="evidence" value="ECO:0007669"/>
    <property type="project" value="InterPro"/>
</dbReference>
<dbReference type="CDD" id="cd10787">
    <property type="entry name" value="LamB_YcsF_like"/>
    <property type="match status" value="1"/>
</dbReference>
<dbReference type="Gene3D" id="3.20.20.370">
    <property type="entry name" value="Glycoside hydrolase/deacetylase"/>
    <property type="match status" value="1"/>
</dbReference>
<dbReference type="HAMAP" id="MF_00691">
    <property type="entry name" value="PxpA"/>
    <property type="match status" value="1"/>
</dbReference>
<dbReference type="InterPro" id="IPR011330">
    <property type="entry name" value="Glyco_hydro/deAcase_b/a-brl"/>
</dbReference>
<dbReference type="InterPro" id="IPR005501">
    <property type="entry name" value="LamB/YcsF/PxpA-like"/>
</dbReference>
<dbReference type="NCBIfam" id="NF003813">
    <property type="entry name" value="PRK05406.1-2"/>
    <property type="match status" value="1"/>
</dbReference>
<dbReference type="NCBIfam" id="NF003814">
    <property type="entry name" value="PRK05406.1-3"/>
    <property type="match status" value="1"/>
</dbReference>
<dbReference type="NCBIfam" id="NF003816">
    <property type="entry name" value="PRK05406.1-5"/>
    <property type="match status" value="1"/>
</dbReference>
<dbReference type="PANTHER" id="PTHR30292:SF0">
    <property type="entry name" value="5-OXOPROLINASE SUBUNIT A"/>
    <property type="match status" value="1"/>
</dbReference>
<dbReference type="PANTHER" id="PTHR30292">
    <property type="entry name" value="UNCHARACTERIZED PROTEIN YBGL-RELATED"/>
    <property type="match status" value="1"/>
</dbReference>
<dbReference type="Pfam" id="PF03746">
    <property type="entry name" value="LamB_YcsF"/>
    <property type="match status" value="1"/>
</dbReference>
<dbReference type="SUPFAM" id="SSF88713">
    <property type="entry name" value="Glycoside hydrolase/deacetylase"/>
    <property type="match status" value="1"/>
</dbReference>
<reference key="1">
    <citation type="journal article" date="2003" name="Nature">
        <title>Genome sequence of Bacillus cereus and comparative analysis with Bacillus anthracis.</title>
        <authorList>
            <person name="Ivanova N."/>
            <person name="Sorokin A."/>
            <person name="Anderson I."/>
            <person name="Galleron N."/>
            <person name="Candelon B."/>
            <person name="Kapatral V."/>
            <person name="Bhattacharyya A."/>
            <person name="Reznik G."/>
            <person name="Mikhailova N."/>
            <person name="Lapidus A."/>
            <person name="Chu L."/>
            <person name="Mazur M."/>
            <person name="Goltsman E."/>
            <person name="Larsen N."/>
            <person name="D'Souza M."/>
            <person name="Walunas T."/>
            <person name="Grechkin Y."/>
            <person name="Pusch G."/>
            <person name="Haselkorn R."/>
            <person name="Fonstein M."/>
            <person name="Ehrlich S.D."/>
            <person name="Overbeek R."/>
            <person name="Kyrpides N.C."/>
        </authorList>
    </citation>
    <scope>NUCLEOTIDE SEQUENCE [LARGE SCALE GENOMIC DNA]</scope>
    <source>
        <strain>ATCC 14579 / DSM 31 / CCUG 7414 / JCM 2152 / NBRC 15305 / NCIMB 9373 / NCTC 2599 / NRRL B-3711</strain>
    </source>
</reference>